<comment type="function">
    <text evidence="3 5 6 8 9 11 12 13 14 15 16 17 18">Protease that catalyzes two essential functions in the SUMO pathway (PubMed:10652325, PubMed:15199155, PubMed:15487983, PubMed:16253240, PubMed:16553580, PubMed:21829689, PubMed:21965678, PubMed:23160374, PubMed:24943844, PubMed:25406032, PubMed:29506078, PubMed:34048572, PubMed:37257451). The first is the hydrolysis of an alpha-linked peptide bond at the C-terminal end of the small ubiquitin-like modifier (SUMO) propeptides, SUMO1, SUMO2 and SUMO3 leading to the mature form of the proteins (PubMed:15487983). The second is the deconjugation of SUMO1, SUMO2 and SUMO3 from targeted proteins, by cleaving an epsilon-linked peptide bond between the C-terminal glycine of the mature SUMO and the lysine epsilon-amino group of the target protein (PubMed:15199155, PubMed:16253240, PubMed:21829689, PubMed:21965678, PubMed:23160374, PubMed:24943844, PubMed:25406032, PubMed:29506078, PubMed:34048572, PubMed:37257451). Deconjugates SUMO1 from HIPK2 (PubMed:16253240). Deconjugates SUMO1 from HDAC1 and BHLHE40/DEC1, which decreases its transcriptional repression activity (PubMed:15199155, PubMed:21829689). Deconjugates SUMO1 from CLOCK, which decreases its transcriptional activation activity (PubMed:23160374). Deconjugates SUMO2 from MTA1 (PubMed:21965678). Inhibits N(6)-methyladenosine (m6A) RNA methylation by mediating SUMO1 deconjugation from METTL3 and ALKBH5: METTL3 inhibits the m6A RNA methyltransferase activity, while ALKBH5 desumoylation promotes m6A demethylation (PubMed:29506078, PubMed:34048572, PubMed:37257451). Desumoylates CCAR2 which decreases its interaction with SIRT1 (PubMed:25406032). Deconjugates SUMO1 from GPS2 (PubMed:24943844).</text>
</comment>
<comment type="subunit">
    <text evidence="18">Interacts with RBM33; promoting ALKBH5 desumoylation and subsequent activation.</text>
</comment>
<comment type="interaction">
    <interactant intactId="EBI-2822935">
        <id>Q9P0U3</id>
    </interactant>
    <interactant intactId="EBI-80140">
        <id>P63165</id>
        <label>SUMO1</label>
    </interactant>
    <organismsDiffer>false</organismsDiffer>
    <experiments>11</experiments>
</comment>
<comment type="interaction">
    <interactant intactId="EBI-2822935">
        <id>Q9P0U3</id>
    </interactant>
    <interactant intactId="EBI-473220">
        <id>P61956</id>
        <label>SUMO2</label>
    </interactant>
    <organismsDiffer>false</organismsDiffer>
    <experiments>6</experiments>
</comment>
<comment type="subcellular location">
    <subcellularLocation>
        <location evidence="4 8 15">Nucleus</location>
    </subcellularLocation>
    <subcellularLocation>
        <location evidence="4 8">Cytoplasm</location>
    </subcellularLocation>
    <text evidence="4">Shuttles between cytoplasm and nucleus.</text>
</comment>
<comment type="alternative products">
    <event type="alternative splicing"/>
    <isoform>
        <id>Q9P0U3-1</id>
        <name>1</name>
        <sequence type="displayed"/>
    </isoform>
    <isoform>
        <id>Q9P0U3-2</id>
        <name>2</name>
        <sequence type="described" ref="VSP_035777"/>
    </isoform>
</comment>
<comment type="tissue specificity">
    <text evidence="6">Highly expressed in testis. Expressed at lower levels in thymus, pancreas, spleen, liver, ovary and small intestine.</text>
</comment>
<comment type="similarity">
    <text evidence="20">Belongs to the peptidase C48 family.</text>
</comment>
<organism>
    <name type="scientific">Homo sapiens</name>
    <name type="common">Human</name>
    <dbReference type="NCBI Taxonomy" id="9606"/>
    <lineage>
        <taxon>Eukaryota</taxon>
        <taxon>Metazoa</taxon>
        <taxon>Chordata</taxon>
        <taxon>Craniata</taxon>
        <taxon>Vertebrata</taxon>
        <taxon>Euteleostomi</taxon>
        <taxon>Mammalia</taxon>
        <taxon>Eutheria</taxon>
        <taxon>Euarchontoglires</taxon>
        <taxon>Primates</taxon>
        <taxon>Haplorrhini</taxon>
        <taxon>Catarrhini</taxon>
        <taxon>Hominidae</taxon>
        <taxon>Homo</taxon>
    </lineage>
</organism>
<name>SENP1_HUMAN</name>
<protein>
    <recommendedName>
        <fullName>Sentrin-specific protease 1</fullName>
        <ecNumber evidence="14 16">3.4.22.-</ecNumber>
    </recommendedName>
    <alternativeName>
        <fullName>Sentrin/SUMO-specific protease SENP1</fullName>
    </alternativeName>
</protein>
<reference key="1">
    <citation type="journal article" date="2000" name="J. Biol. Chem.">
        <title>Differential regulation of sentrinized proteins by a novel sentrin-specific protease.</title>
        <authorList>
            <person name="Gong L."/>
            <person name="Millas S."/>
            <person name="Maul G.G."/>
            <person name="Yeh E.T.H."/>
        </authorList>
    </citation>
    <scope>NUCLEOTIDE SEQUENCE [MRNA] (ISOFORM 2)</scope>
    <scope>FUNCTION</scope>
    <source>
        <tissue>Placenta</tissue>
    </source>
</reference>
<reference key="2">
    <citation type="journal article" date="2004" name="Nat. Genet.">
        <title>Complete sequencing and characterization of 21,243 full-length human cDNAs.</title>
        <authorList>
            <person name="Ota T."/>
            <person name="Suzuki Y."/>
            <person name="Nishikawa T."/>
            <person name="Otsuki T."/>
            <person name="Sugiyama T."/>
            <person name="Irie R."/>
            <person name="Wakamatsu A."/>
            <person name="Hayashi K."/>
            <person name="Sato H."/>
            <person name="Nagai K."/>
            <person name="Kimura K."/>
            <person name="Makita H."/>
            <person name="Sekine M."/>
            <person name="Obayashi M."/>
            <person name="Nishi T."/>
            <person name="Shibahara T."/>
            <person name="Tanaka T."/>
            <person name="Ishii S."/>
            <person name="Yamamoto J."/>
            <person name="Saito K."/>
            <person name="Kawai Y."/>
            <person name="Isono Y."/>
            <person name="Nakamura Y."/>
            <person name="Nagahari K."/>
            <person name="Murakami K."/>
            <person name="Yasuda T."/>
            <person name="Iwayanagi T."/>
            <person name="Wagatsuma M."/>
            <person name="Shiratori A."/>
            <person name="Sudo H."/>
            <person name="Hosoiri T."/>
            <person name="Kaku Y."/>
            <person name="Kodaira H."/>
            <person name="Kondo H."/>
            <person name="Sugawara M."/>
            <person name="Takahashi M."/>
            <person name="Kanda K."/>
            <person name="Yokoi T."/>
            <person name="Furuya T."/>
            <person name="Kikkawa E."/>
            <person name="Omura Y."/>
            <person name="Abe K."/>
            <person name="Kamihara K."/>
            <person name="Katsuta N."/>
            <person name="Sato K."/>
            <person name="Tanikawa M."/>
            <person name="Yamazaki M."/>
            <person name="Ninomiya K."/>
            <person name="Ishibashi T."/>
            <person name="Yamashita H."/>
            <person name="Murakawa K."/>
            <person name="Fujimori K."/>
            <person name="Tanai H."/>
            <person name="Kimata M."/>
            <person name="Watanabe M."/>
            <person name="Hiraoka S."/>
            <person name="Chiba Y."/>
            <person name="Ishida S."/>
            <person name="Ono Y."/>
            <person name="Takiguchi S."/>
            <person name="Watanabe S."/>
            <person name="Yosida M."/>
            <person name="Hotuta T."/>
            <person name="Kusano J."/>
            <person name="Kanehori K."/>
            <person name="Takahashi-Fujii A."/>
            <person name="Hara H."/>
            <person name="Tanase T.-O."/>
            <person name="Nomura Y."/>
            <person name="Togiya S."/>
            <person name="Komai F."/>
            <person name="Hara R."/>
            <person name="Takeuchi K."/>
            <person name="Arita M."/>
            <person name="Imose N."/>
            <person name="Musashino K."/>
            <person name="Yuuki H."/>
            <person name="Oshima A."/>
            <person name="Sasaki N."/>
            <person name="Aotsuka S."/>
            <person name="Yoshikawa Y."/>
            <person name="Matsunawa H."/>
            <person name="Ichihara T."/>
            <person name="Shiohata N."/>
            <person name="Sano S."/>
            <person name="Moriya S."/>
            <person name="Momiyama H."/>
            <person name="Satoh N."/>
            <person name="Takami S."/>
            <person name="Terashima Y."/>
            <person name="Suzuki O."/>
            <person name="Nakagawa S."/>
            <person name="Senoh A."/>
            <person name="Mizoguchi H."/>
            <person name="Goto Y."/>
            <person name="Shimizu F."/>
            <person name="Wakebe H."/>
            <person name="Hishigaki H."/>
            <person name="Watanabe T."/>
            <person name="Sugiyama A."/>
            <person name="Takemoto M."/>
            <person name="Kawakami B."/>
            <person name="Yamazaki M."/>
            <person name="Watanabe K."/>
            <person name="Kumagai A."/>
            <person name="Itakura S."/>
            <person name="Fukuzumi Y."/>
            <person name="Fujimori Y."/>
            <person name="Komiyama M."/>
            <person name="Tashiro H."/>
            <person name="Tanigami A."/>
            <person name="Fujiwara T."/>
            <person name="Ono T."/>
            <person name="Yamada K."/>
            <person name="Fujii Y."/>
            <person name="Ozaki K."/>
            <person name="Hirao M."/>
            <person name="Ohmori Y."/>
            <person name="Kawabata A."/>
            <person name="Hikiji T."/>
            <person name="Kobatake N."/>
            <person name="Inagaki H."/>
            <person name="Ikema Y."/>
            <person name="Okamoto S."/>
            <person name="Okitani R."/>
            <person name="Kawakami T."/>
            <person name="Noguchi S."/>
            <person name="Itoh T."/>
            <person name="Shigeta K."/>
            <person name="Senba T."/>
            <person name="Matsumura K."/>
            <person name="Nakajima Y."/>
            <person name="Mizuno T."/>
            <person name="Morinaga M."/>
            <person name="Sasaki M."/>
            <person name="Togashi T."/>
            <person name="Oyama M."/>
            <person name="Hata H."/>
            <person name="Watanabe M."/>
            <person name="Komatsu T."/>
            <person name="Mizushima-Sugano J."/>
            <person name="Satoh T."/>
            <person name="Shirai Y."/>
            <person name="Takahashi Y."/>
            <person name="Nakagawa K."/>
            <person name="Okumura K."/>
            <person name="Nagase T."/>
            <person name="Nomura N."/>
            <person name="Kikuchi H."/>
            <person name="Masuho Y."/>
            <person name="Yamashita R."/>
            <person name="Nakai K."/>
            <person name="Yada T."/>
            <person name="Nakamura Y."/>
            <person name="Ohara O."/>
            <person name="Isogai T."/>
            <person name="Sugano S."/>
        </authorList>
    </citation>
    <scope>NUCLEOTIDE SEQUENCE [LARGE SCALE MRNA] (ISOFORM 1)</scope>
    <source>
        <tissue>Stomach</tissue>
    </source>
</reference>
<reference key="3">
    <citation type="journal article" date="2006" name="Nature">
        <title>The finished DNA sequence of human chromosome 12.</title>
        <authorList>
            <person name="Scherer S.E."/>
            <person name="Muzny D.M."/>
            <person name="Buhay C.J."/>
            <person name="Chen R."/>
            <person name="Cree A."/>
            <person name="Ding Y."/>
            <person name="Dugan-Rocha S."/>
            <person name="Gill R."/>
            <person name="Gunaratne P."/>
            <person name="Harris R.A."/>
            <person name="Hawes A.C."/>
            <person name="Hernandez J."/>
            <person name="Hodgson A.V."/>
            <person name="Hume J."/>
            <person name="Jackson A."/>
            <person name="Khan Z.M."/>
            <person name="Kovar-Smith C."/>
            <person name="Lewis L.R."/>
            <person name="Lozado R.J."/>
            <person name="Metzker M.L."/>
            <person name="Milosavljevic A."/>
            <person name="Miner G.R."/>
            <person name="Montgomery K.T."/>
            <person name="Morgan M.B."/>
            <person name="Nazareth L.V."/>
            <person name="Scott G."/>
            <person name="Sodergren E."/>
            <person name="Song X.-Z."/>
            <person name="Steffen D."/>
            <person name="Lovering R.C."/>
            <person name="Wheeler D.A."/>
            <person name="Worley K.C."/>
            <person name="Yuan Y."/>
            <person name="Zhang Z."/>
            <person name="Adams C.Q."/>
            <person name="Ansari-Lari M.A."/>
            <person name="Ayele M."/>
            <person name="Brown M.J."/>
            <person name="Chen G."/>
            <person name="Chen Z."/>
            <person name="Clerc-Blankenburg K.P."/>
            <person name="Davis C."/>
            <person name="Delgado O."/>
            <person name="Dinh H.H."/>
            <person name="Draper H."/>
            <person name="Gonzalez-Garay M.L."/>
            <person name="Havlak P."/>
            <person name="Jackson L.R."/>
            <person name="Jacob L.S."/>
            <person name="Kelly S.H."/>
            <person name="Li L."/>
            <person name="Li Z."/>
            <person name="Liu J."/>
            <person name="Liu W."/>
            <person name="Lu J."/>
            <person name="Maheshwari M."/>
            <person name="Nguyen B.-V."/>
            <person name="Okwuonu G.O."/>
            <person name="Pasternak S."/>
            <person name="Perez L.M."/>
            <person name="Plopper F.J.H."/>
            <person name="Santibanez J."/>
            <person name="Shen H."/>
            <person name="Tabor P.E."/>
            <person name="Verduzco D."/>
            <person name="Waldron L."/>
            <person name="Wang Q."/>
            <person name="Williams G.A."/>
            <person name="Zhang J."/>
            <person name="Zhou J."/>
            <person name="Allen C.C."/>
            <person name="Amin A.G."/>
            <person name="Anyalebechi V."/>
            <person name="Bailey M."/>
            <person name="Barbaria J.A."/>
            <person name="Bimage K.E."/>
            <person name="Bryant N.P."/>
            <person name="Burch P.E."/>
            <person name="Burkett C.E."/>
            <person name="Burrell K.L."/>
            <person name="Calderon E."/>
            <person name="Cardenas V."/>
            <person name="Carter K."/>
            <person name="Casias K."/>
            <person name="Cavazos I."/>
            <person name="Cavazos S.R."/>
            <person name="Ceasar H."/>
            <person name="Chacko J."/>
            <person name="Chan S.N."/>
            <person name="Chavez D."/>
            <person name="Christopoulos C."/>
            <person name="Chu J."/>
            <person name="Cockrell R."/>
            <person name="Cox C.D."/>
            <person name="Dang M."/>
            <person name="Dathorne S.R."/>
            <person name="David R."/>
            <person name="Davis C.M."/>
            <person name="Davy-Carroll L."/>
            <person name="Deshazo D.R."/>
            <person name="Donlin J.E."/>
            <person name="D'Souza L."/>
            <person name="Eaves K.A."/>
            <person name="Egan A."/>
            <person name="Emery-Cohen A.J."/>
            <person name="Escotto M."/>
            <person name="Flagg N."/>
            <person name="Forbes L.D."/>
            <person name="Gabisi A.M."/>
            <person name="Garza M."/>
            <person name="Hamilton C."/>
            <person name="Henderson N."/>
            <person name="Hernandez O."/>
            <person name="Hines S."/>
            <person name="Hogues M.E."/>
            <person name="Huang M."/>
            <person name="Idlebird D.G."/>
            <person name="Johnson R."/>
            <person name="Jolivet A."/>
            <person name="Jones S."/>
            <person name="Kagan R."/>
            <person name="King L.M."/>
            <person name="Leal B."/>
            <person name="Lebow H."/>
            <person name="Lee S."/>
            <person name="LeVan J.M."/>
            <person name="Lewis L.C."/>
            <person name="London P."/>
            <person name="Lorensuhewa L.M."/>
            <person name="Loulseged H."/>
            <person name="Lovett D.A."/>
            <person name="Lucier A."/>
            <person name="Lucier R.L."/>
            <person name="Ma J."/>
            <person name="Madu R.C."/>
            <person name="Mapua P."/>
            <person name="Martindale A.D."/>
            <person name="Martinez E."/>
            <person name="Massey E."/>
            <person name="Mawhiney S."/>
            <person name="Meador M.G."/>
            <person name="Mendez S."/>
            <person name="Mercado C."/>
            <person name="Mercado I.C."/>
            <person name="Merritt C.E."/>
            <person name="Miner Z.L."/>
            <person name="Minja E."/>
            <person name="Mitchell T."/>
            <person name="Mohabbat F."/>
            <person name="Mohabbat K."/>
            <person name="Montgomery B."/>
            <person name="Moore N."/>
            <person name="Morris S."/>
            <person name="Munidasa M."/>
            <person name="Ngo R.N."/>
            <person name="Nguyen N.B."/>
            <person name="Nickerson E."/>
            <person name="Nwaokelemeh O.O."/>
            <person name="Nwokenkwo S."/>
            <person name="Obregon M."/>
            <person name="Oguh M."/>
            <person name="Oragunye N."/>
            <person name="Oviedo R.J."/>
            <person name="Parish B.J."/>
            <person name="Parker D.N."/>
            <person name="Parrish J."/>
            <person name="Parks K.L."/>
            <person name="Paul H.A."/>
            <person name="Payton B.A."/>
            <person name="Perez A."/>
            <person name="Perrin W."/>
            <person name="Pickens A."/>
            <person name="Primus E.L."/>
            <person name="Pu L.-L."/>
            <person name="Puazo M."/>
            <person name="Quiles M.M."/>
            <person name="Quiroz J.B."/>
            <person name="Rabata D."/>
            <person name="Reeves K."/>
            <person name="Ruiz S.J."/>
            <person name="Shao H."/>
            <person name="Sisson I."/>
            <person name="Sonaike T."/>
            <person name="Sorelle R.P."/>
            <person name="Sutton A.E."/>
            <person name="Svatek A.F."/>
            <person name="Svetz L.A."/>
            <person name="Tamerisa K.S."/>
            <person name="Taylor T.R."/>
            <person name="Teague B."/>
            <person name="Thomas N."/>
            <person name="Thorn R.D."/>
            <person name="Trejos Z.Y."/>
            <person name="Trevino B.K."/>
            <person name="Ukegbu O.N."/>
            <person name="Urban J.B."/>
            <person name="Vasquez L.I."/>
            <person name="Vera V.A."/>
            <person name="Villasana D.M."/>
            <person name="Wang L."/>
            <person name="Ward-Moore S."/>
            <person name="Warren J.T."/>
            <person name="Wei X."/>
            <person name="White F."/>
            <person name="Williamson A.L."/>
            <person name="Wleczyk R."/>
            <person name="Wooden H.S."/>
            <person name="Wooden S.H."/>
            <person name="Yen J."/>
            <person name="Yoon L."/>
            <person name="Yoon V."/>
            <person name="Zorrilla S.E."/>
            <person name="Nelson D."/>
            <person name="Kucherlapati R."/>
            <person name="Weinstock G."/>
            <person name="Gibbs R.A."/>
        </authorList>
    </citation>
    <scope>NUCLEOTIDE SEQUENCE [LARGE SCALE GENOMIC DNA]</scope>
</reference>
<reference key="4">
    <citation type="journal article" date="2004" name="Genome Res.">
        <title>The status, quality, and expansion of the NIH full-length cDNA project: the Mammalian Gene Collection (MGC).</title>
        <authorList>
            <consortium name="The MGC Project Team"/>
        </authorList>
    </citation>
    <scope>NUCLEOTIDE SEQUENCE [LARGE SCALE MRNA] (ISOFORM 1)</scope>
    <scope>VARIANTS VAL-193 AND GLY-350</scope>
    <source>
        <tissue>Testis</tissue>
    </source>
</reference>
<reference key="5">
    <citation type="journal article" date="2004" name="J. Biol. Chem.">
        <title>Characterization of the localization and proteolytic activity of the SUMO-specific protease, SENP1.</title>
        <authorList>
            <person name="Bailey D."/>
            <person name="O'Hare P."/>
        </authorList>
    </citation>
    <scope>NUCLEAR LOCALIZATION SIGNAL</scope>
    <scope>SUBCELLULAR LOCATION</scope>
    <scope>MUTAGENESIS OF CYS-603</scope>
</reference>
<reference key="6">
    <citation type="journal article" date="2004" name="Mol. Cell. Biol.">
        <title>SENP1 enhances androgen receptor-dependent transcription through desumoylation of histone deacetylase 1.</title>
        <authorList>
            <person name="Cheng J."/>
            <person name="Wang D."/>
            <person name="Wang Z."/>
            <person name="Yeh E.T.H."/>
        </authorList>
    </citation>
    <scope>FUNCTION</scope>
</reference>
<reference key="7">
    <citation type="journal article" date="2005" name="Biochem. J.">
        <title>Mapping residues of SUMO precursors essential in differential maturation by SUMO-specific protease, SENP1.</title>
        <authorList>
            <person name="Xu Z."/>
            <person name="Au S.W.N."/>
        </authorList>
    </citation>
    <scope>FUNCTION</scope>
    <scope>TISSUE SPECIFICITY</scope>
</reference>
<reference key="8">
    <citation type="journal article" date="2005" name="FEBS Lett.">
        <title>Desumoylation of homeodomain-interacting protein kinase 2 (HIPK2) through the cytoplasmic-nuclear shuttling of the SUMO-specific protease SENP1.</title>
        <authorList>
            <person name="Kim Y.H."/>
            <person name="Sung K.S."/>
            <person name="Lee S.-J."/>
            <person name="Kim Y.-O."/>
            <person name="Choi C.Y."/>
            <person name="Kim Y."/>
        </authorList>
    </citation>
    <scope>NUCLEAR EXPORT SIGNAL</scope>
    <scope>SUBCELLULAR LOCATION</scope>
    <scope>FUNCTION</scope>
</reference>
<reference key="9">
    <citation type="journal article" date="2008" name="Proc. Natl. Acad. Sci. U.S.A.">
        <title>A quantitative atlas of mitotic phosphorylation.</title>
        <authorList>
            <person name="Dephoure N."/>
            <person name="Zhou C."/>
            <person name="Villen J."/>
            <person name="Beausoleil S.A."/>
            <person name="Bakalarski C.E."/>
            <person name="Elledge S.J."/>
            <person name="Gygi S.P."/>
        </authorList>
    </citation>
    <scope>PHOSPHORYLATION [LARGE SCALE ANALYSIS] AT SER-157</scope>
    <scope>IDENTIFICATION BY MASS SPECTROMETRY [LARGE SCALE ANALYSIS]</scope>
    <source>
        <tissue>Cervix carcinoma</tissue>
    </source>
</reference>
<reference key="10">
    <citation type="journal article" date="2011" name="J. Biol. Chem.">
        <title>SUMOylation and SUMO-interacting motif (SIM) of metastasis tumor antigen 1 (MTA1) synergistically regulate its transcriptional repressor function.</title>
        <authorList>
            <person name="Cong L."/>
            <person name="Pakala S.B."/>
            <person name="Ohshiro K."/>
            <person name="Li D.Q."/>
            <person name="Kumar R."/>
        </authorList>
    </citation>
    <scope>FUNCTION</scope>
</reference>
<reference key="11">
    <citation type="journal article" date="2011" name="PLoS ONE">
        <title>SUMOylation of DEC1 protein regulates its transcriptional activity and enhances its stability.</title>
        <authorList>
            <person name="Hong Y."/>
            <person name="Xing X."/>
            <person name="Li S."/>
            <person name="Bi H."/>
            <person name="Yang C."/>
            <person name="Zhao F."/>
            <person name="Liu Y."/>
            <person name="Ao X."/>
            <person name="Chang A.K."/>
            <person name="Wu H."/>
        </authorList>
    </citation>
    <scope>FUNCTION</scope>
</reference>
<reference key="12">
    <citation type="journal article" date="2013" name="J. Proteome Res.">
        <title>Toward a comprehensive characterization of a human cancer cell phosphoproteome.</title>
        <authorList>
            <person name="Zhou H."/>
            <person name="Di Palma S."/>
            <person name="Preisinger C."/>
            <person name="Peng M."/>
            <person name="Polat A.N."/>
            <person name="Heck A.J."/>
            <person name="Mohammed S."/>
        </authorList>
    </citation>
    <scope>PHOSPHORYLATION [LARGE SCALE ANALYSIS] AT SER-57; SER-117; SER-132 AND SER-157</scope>
    <scope>IDENTIFICATION BY MASS SPECTROMETRY [LARGE SCALE ANALYSIS]</scope>
    <source>
        <tissue>Cervix carcinoma</tissue>
        <tissue>Erythroleukemia</tissue>
    </source>
</reference>
<reference key="13">
    <citation type="journal article" date="2013" name="Oncogene">
        <title>CLOCK is a substrate of SUMO and sumoylation of CLOCK upregulates the transcriptional activity of estrogen receptor-alpha.</title>
        <authorList>
            <person name="Li S."/>
            <person name="Wang M."/>
            <person name="Ao X."/>
            <person name="Chang A.K."/>
            <person name="Yang C."/>
            <person name="Zhao F."/>
            <person name="Bi H."/>
            <person name="Liu Y."/>
            <person name="Xiao L."/>
            <person name="Wu H."/>
        </authorList>
    </citation>
    <scope>FUNCTION</scope>
</reference>
<reference key="14">
    <citation type="journal article" date="2014" name="J. Proteomics">
        <title>An enzyme assisted RP-RPLC approach for in-depth analysis of human liver phosphoproteome.</title>
        <authorList>
            <person name="Bian Y."/>
            <person name="Song C."/>
            <person name="Cheng K."/>
            <person name="Dong M."/>
            <person name="Wang F."/>
            <person name="Huang J."/>
            <person name="Sun D."/>
            <person name="Wang L."/>
            <person name="Ye M."/>
            <person name="Zou H."/>
        </authorList>
    </citation>
    <scope>PHOSPHORYLATION [LARGE SCALE ANALYSIS] AT SER-132</scope>
    <scope>IDENTIFICATION BY MASS SPECTROMETRY [LARGE SCALE ANALYSIS]</scope>
    <source>
        <tissue>Liver</tissue>
    </source>
</reference>
<reference key="15">
    <citation type="journal article" date="2014" name="Mol. Biol. Cell">
        <title>SUMOylation of GPS2 protein regulates its transcription-suppressing function.</title>
        <authorList>
            <person name="Bi H."/>
            <person name="Li S."/>
            <person name="Wang M."/>
            <person name="Jia Z."/>
            <person name="Chang A.K."/>
            <person name="Pang P."/>
            <person name="Wu H."/>
        </authorList>
    </citation>
    <scope>FUNCTION</scope>
    <scope>CATALYTIC ACTIVITY</scope>
</reference>
<reference key="16">
    <citation type="journal article" date="2014" name="Nat. Commun.">
        <title>Modification of DBC1 by SUMO2/3 is crucial for p53-mediated apoptosis in response to DNA damage.</title>
        <authorList>
            <person name="Park J.H."/>
            <person name="Lee S.W."/>
            <person name="Yang S.W."/>
            <person name="Yoo H.M."/>
            <person name="Park J.M."/>
            <person name="Seong M.W."/>
            <person name="Ka S.H."/>
            <person name="Oh K.H."/>
            <person name="Jeon Y.J."/>
            <person name="Chung C.H."/>
        </authorList>
    </citation>
    <scope>FUNCTION</scope>
    <scope>SUBCELLULAR LOCATION</scope>
    <scope>MUTAGENESIS OF CYS-603</scope>
</reference>
<reference key="17">
    <citation type="journal article" date="2018" name="Nucleic Acids Res.">
        <title>SUMOylation of the m6A-RNA methyltransferase METTL3 modulates its function.</title>
        <authorList>
            <person name="Du Y."/>
            <person name="Hou G."/>
            <person name="Zhang H."/>
            <person name="Dou J."/>
            <person name="He J."/>
            <person name="Guo Y."/>
            <person name="Li L."/>
            <person name="Chen R."/>
            <person name="Wang Y."/>
            <person name="Deng R."/>
            <person name="Huang J."/>
            <person name="Jiang B."/>
            <person name="Xu M."/>
            <person name="Cheng J."/>
            <person name="Chen G.Q."/>
            <person name="Zhao X."/>
            <person name="Yu J."/>
        </authorList>
    </citation>
    <scope>FUNCTION</scope>
    <scope>CATALYTIC ACTIVITY</scope>
</reference>
<reference key="18">
    <citation type="journal article" date="2021" name="Nucleic Acids Res.">
        <title>Post-translational modification of RNA m6A demethylase ALKBH5 regulates ROS-induced DNA damage response.</title>
        <authorList>
            <person name="Yu F."/>
            <person name="Wei J."/>
            <person name="Cui X."/>
            <person name="Yu C."/>
            <person name="Ni W."/>
            <person name="Bungert J."/>
            <person name="Wu L."/>
            <person name="He C."/>
            <person name="Qian Z."/>
        </authorList>
    </citation>
    <scope>FUNCTION</scope>
</reference>
<reference key="19">
    <citation type="journal article" date="2023" name="Mol. Cell">
        <title>RBM33 is a unique m6A RNA-binding protein that regulates ALKBH5 demethylase activity and substrate selectivity.</title>
        <authorList>
            <person name="Yu F."/>
            <person name="Zhu A.C."/>
            <person name="Liu S."/>
            <person name="Gao B."/>
            <person name="Wang Y."/>
            <person name="Khudaverdyan N."/>
            <person name="Yu C."/>
            <person name="Wu Q."/>
            <person name="Jiang Y."/>
            <person name="Song J."/>
            <person name="Jin L."/>
            <person name="He C."/>
            <person name="Qian Z."/>
        </authorList>
    </citation>
    <scope>FUNCTION</scope>
    <scope>INTERACTION WITH RBM33</scope>
</reference>
<reference key="20">
    <citation type="journal article" date="2006" name="Biochem. J.">
        <title>The structure of SENP1-SUMO-2 complex suggests a structural basis for discrimination between SUMO paralogues during processing.</title>
        <authorList>
            <person name="Shen L.N."/>
            <person name="Dong C."/>
            <person name="Liu H."/>
            <person name="Naismith J.H."/>
            <person name="Hay R.T."/>
        </authorList>
    </citation>
    <scope>X-RAY CRYSTALLOGRAPHY (2.45 ANGSTROMS) OF 419-644</scope>
    <scope>X-RAY CRYSTALLOGRAPHY (3.2 ANGSTROMS) OF 419-644 IN COMPLEX WITH SUMO3</scope>
    <scope>MUTAGENESIS OF ASP-441; TRP-465; ASP-468; PHE-496; ARG-511; TRP-512; HIS-529; VAL-532; HIS-533; TRP-534; ASP-550; GLN-597 AND CYS-603</scope>
    <scope>FUNCTION</scope>
</reference>
<reference key="21">
    <citation type="journal article" date="2006" name="Biochem. J.">
        <title>Crystal structure of the SENP1 mutant C603S-SUMO complex reveals the hydrolytic mechanism of SUMO-specific protease.</title>
        <authorList>
            <person name="Xu Z."/>
            <person name="Chau S.F."/>
            <person name="Lam K.H."/>
            <person name="Chan H.Y."/>
            <person name="Ng T.B."/>
            <person name="Au S.W.N."/>
        </authorList>
    </citation>
    <scope>X-RAY CRYSTALLOGRAPHY (2.8 ANGSTROMS) OF 439-644 IN COMPLEX WITH SUMO1</scope>
    <scope>MUTAGENESIS OF CYS-603</scope>
</reference>
<reference key="22">
    <citation type="journal article" date="2006" name="Nat. Struct. Mol. Biol.">
        <title>SUMO protease SENP1 induces isomerization of the scissile peptide bond.</title>
        <authorList>
            <person name="Shen L."/>
            <person name="Tatham M.H."/>
            <person name="Dong C."/>
            <person name="Zagorska A."/>
            <person name="Naismith J.H."/>
            <person name="Hay R.T."/>
        </authorList>
    </citation>
    <scope>X-RAY CRYSTALLOGRAPHY (2.77 ANGSTROMS) OF 439-644 IN COMPLEX WITH RANGAP1 AND SUMO1</scope>
</reference>
<evidence type="ECO:0000255" key="1"/>
<evidence type="ECO:0000256" key="2">
    <source>
        <dbReference type="SAM" id="MobiDB-lite"/>
    </source>
</evidence>
<evidence type="ECO:0000269" key="3">
    <source>
    </source>
</evidence>
<evidence type="ECO:0000269" key="4">
    <source>
    </source>
</evidence>
<evidence type="ECO:0000269" key="5">
    <source>
    </source>
</evidence>
<evidence type="ECO:0000269" key="6">
    <source>
    </source>
</evidence>
<evidence type="ECO:0000269" key="7">
    <source>
    </source>
</evidence>
<evidence type="ECO:0000269" key="8">
    <source>
    </source>
</evidence>
<evidence type="ECO:0000269" key="9">
    <source>
    </source>
</evidence>
<evidence type="ECO:0000269" key="10">
    <source>
    </source>
</evidence>
<evidence type="ECO:0000269" key="11">
    <source>
    </source>
</evidence>
<evidence type="ECO:0000269" key="12">
    <source>
    </source>
</evidence>
<evidence type="ECO:0000269" key="13">
    <source>
    </source>
</evidence>
<evidence type="ECO:0000269" key="14">
    <source>
    </source>
</evidence>
<evidence type="ECO:0000269" key="15">
    <source>
    </source>
</evidence>
<evidence type="ECO:0000269" key="16">
    <source>
    </source>
</evidence>
<evidence type="ECO:0000269" key="17">
    <source>
    </source>
</evidence>
<evidence type="ECO:0000269" key="18">
    <source>
    </source>
</evidence>
<evidence type="ECO:0000303" key="19">
    <source>
    </source>
</evidence>
<evidence type="ECO:0000305" key="20"/>
<evidence type="ECO:0000305" key="21">
    <source>
    </source>
</evidence>
<evidence type="ECO:0000305" key="22">
    <source>
    </source>
</evidence>
<evidence type="ECO:0007744" key="23">
    <source>
    </source>
</evidence>
<evidence type="ECO:0007744" key="24">
    <source>
    </source>
</evidence>
<evidence type="ECO:0007744" key="25">
    <source>
    </source>
</evidence>
<evidence type="ECO:0007829" key="26">
    <source>
        <dbReference type="PDB" id="2IYD"/>
    </source>
</evidence>
<evidence type="ECO:0007829" key="27">
    <source>
        <dbReference type="PDB" id="2XPH"/>
    </source>
</evidence>
<dbReference type="EC" id="3.4.22.-" evidence="14 16"/>
<dbReference type="EMBL" id="AF149770">
    <property type="protein sequence ID" value="AAF31171.1"/>
    <property type="molecule type" value="mRNA"/>
</dbReference>
<dbReference type="EMBL" id="AK292060">
    <property type="protein sequence ID" value="BAF84749.1"/>
    <property type="molecule type" value="mRNA"/>
</dbReference>
<dbReference type="EMBL" id="AC074029">
    <property type="status" value="NOT_ANNOTATED_CDS"/>
    <property type="molecule type" value="Genomic_DNA"/>
</dbReference>
<dbReference type="EMBL" id="BC045639">
    <property type="protein sequence ID" value="AAH45639.2"/>
    <property type="molecule type" value="mRNA"/>
</dbReference>
<dbReference type="CCDS" id="CCDS44868.2">
    <molecule id="Q9P0U3-1"/>
</dbReference>
<dbReference type="RefSeq" id="NP_001254523.1">
    <molecule id="Q9P0U3-1"/>
    <property type="nucleotide sequence ID" value="NM_001267594.2"/>
</dbReference>
<dbReference type="RefSeq" id="NP_001254524.1">
    <molecule id="Q9P0U3-1"/>
    <property type="nucleotide sequence ID" value="NM_001267595.2"/>
</dbReference>
<dbReference type="PDB" id="2CKG">
    <property type="method" value="X-ray"/>
    <property type="resolution" value="2.45 A"/>
    <property type="chains" value="A/B=419-644"/>
</dbReference>
<dbReference type="PDB" id="2CKH">
    <property type="method" value="X-ray"/>
    <property type="resolution" value="3.20 A"/>
    <property type="chains" value="A=419-644"/>
</dbReference>
<dbReference type="PDB" id="2G4D">
    <property type="method" value="X-ray"/>
    <property type="resolution" value="2.80 A"/>
    <property type="chains" value="A/C=440-644"/>
</dbReference>
<dbReference type="PDB" id="2IY0">
    <property type="method" value="X-ray"/>
    <property type="resolution" value="2.77 A"/>
    <property type="chains" value="A=419-644"/>
</dbReference>
<dbReference type="PDB" id="2IY1">
    <property type="method" value="X-ray"/>
    <property type="resolution" value="2.46 A"/>
    <property type="chains" value="A/C=419-644"/>
</dbReference>
<dbReference type="PDB" id="2IYC">
    <property type="method" value="X-ray"/>
    <property type="resolution" value="2.45 A"/>
    <property type="chains" value="A/B=419-644"/>
</dbReference>
<dbReference type="PDB" id="2IYD">
    <property type="method" value="X-ray"/>
    <property type="resolution" value="3.20 A"/>
    <property type="chains" value="A=419-644"/>
</dbReference>
<dbReference type="PDB" id="2XPH">
    <property type="method" value="X-ray"/>
    <property type="resolution" value="2.40 A"/>
    <property type="chains" value="A/B=415-644"/>
</dbReference>
<dbReference type="PDB" id="2XRE">
    <property type="method" value="X-ray"/>
    <property type="resolution" value="2.45 A"/>
    <property type="chains" value="A/B=415-644"/>
</dbReference>
<dbReference type="PDB" id="6NNQ">
    <property type="method" value="X-ray"/>
    <property type="resolution" value="2.62 A"/>
    <property type="chains" value="A=421-644"/>
</dbReference>
<dbReference type="PDBsum" id="2CKG"/>
<dbReference type="PDBsum" id="2CKH"/>
<dbReference type="PDBsum" id="2G4D"/>
<dbReference type="PDBsum" id="2IY0"/>
<dbReference type="PDBsum" id="2IY1"/>
<dbReference type="PDBsum" id="2IYC"/>
<dbReference type="PDBsum" id="2IYD"/>
<dbReference type="PDBsum" id="2XPH"/>
<dbReference type="PDBsum" id="2XRE"/>
<dbReference type="PDBsum" id="6NNQ"/>
<dbReference type="BMRB" id="Q9P0U3"/>
<dbReference type="SMR" id="Q9P0U3"/>
<dbReference type="BioGRID" id="118930">
    <property type="interactions" value="141"/>
</dbReference>
<dbReference type="CORUM" id="Q9P0U3"/>
<dbReference type="DIP" id="DIP-29252N"/>
<dbReference type="FunCoup" id="Q9P0U3">
    <property type="interactions" value="3280"/>
</dbReference>
<dbReference type="IntAct" id="Q9P0U3">
    <property type="interactions" value="56"/>
</dbReference>
<dbReference type="MINT" id="Q9P0U3"/>
<dbReference type="STRING" id="9606.ENSP00000394791"/>
<dbReference type="BindingDB" id="Q9P0U3"/>
<dbReference type="ChEMBL" id="CHEMBL1909484"/>
<dbReference type="GuidetoPHARMACOLOGY" id="2414"/>
<dbReference type="MEROPS" id="C48.002"/>
<dbReference type="GlyGen" id="Q9P0U3">
    <property type="glycosylation" value="2 sites, 1 O-linked glycan (1 site)"/>
</dbReference>
<dbReference type="iPTMnet" id="Q9P0U3"/>
<dbReference type="PhosphoSitePlus" id="Q9P0U3"/>
<dbReference type="SwissPalm" id="Q9P0U3"/>
<dbReference type="BioMuta" id="SENP1"/>
<dbReference type="DMDM" id="215273882"/>
<dbReference type="jPOST" id="Q9P0U3"/>
<dbReference type="MassIVE" id="Q9P0U3"/>
<dbReference type="PaxDb" id="9606-ENSP00000394791"/>
<dbReference type="PeptideAtlas" id="Q9P0U3"/>
<dbReference type="ProteomicsDB" id="83598">
    <molecule id="Q9P0U3-1"/>
</dbReference>
<dbReference type="ProteomicsDB" id="83599">
    <molecule id="Q9P0U3-2"/>
</dbReference>
<dbReference type="Pumba" id="Q9P0U3"/>
<dbReference type="Antibodypedia" id="1710">
    <property type="antibodies" value="434 antibodies from 38 providers"/>
</dbReference>
<dbReference type="DNASU" id="29843"/>
<dbReference type="Ensembl" id="ENST00000448372.6">
    <molecule id="Q9P0U3-1"/>
    <property type="protein sequence ID" value="ENSP00000394791.2"/>
    <property type="gene ID" value="ENSG00000079387.15"/>
</dbReference>
<dbReference type="Ensembl" id="ENST00000549518.6">
    <molecule id="Q9P0U3-1"/>
    <property type="protein sequence ID" value="ENSP00000447328.1"/>
    <property type="gene ID" value="ENSG00000079387.15"/>
</dbReference>
<dbReference type="Ensembl" id="ENST00000549595.5">
    <molecule id="Q9P0U3-2"/>
    <property type="protein sequence ID" value="ENSP00000450076.1"/>
    <property type="gene ID" value="ENSG00000079387.15"/>
</dbReference>
<dbReference type="GeneID" id="29843"/>
<dbReference type="KEGG" id="hsa:29843"/>
<dbReference type="MANE-Select" id="ENST00000549518.6">
    <property type="protein sequence ID" value="ENSP00000447328.1"/>
    <property type="RefSeq nucleotide sequence ID" value="NM_001267594.2"/>
    <property type="RefSeq protein sequence ID" value="NP_001254523.1"/>
</dbReference>
<dbReference type="UCSC" id="uc001rqx.5">
    <molecule id="Q9P0U3-1"/>
    <property type="organism name" value="human"/>
</dbReference>
<dbReference type="AGR" id="HGNC:17927"/>
<dbReference type="CTD" id="29843"/>
<dbReference type="DisGeNET" id="29843"/>
<dbReference type="GeneCards" id="SENP1"/>
<dbReference type="HGNC" id="HGNC:17927">
    <property type="gene designation" value="SENP1"/>
</dbReference>
<dbReference type="HPA" id="ENSG00000079387">
    <property type="expression patterns" value="Tissue enhanced (salivary gland, testis)"/>
</dbReference>
<dbReference type="MIM" id="612157">
    <property type="type" value="gene"/>
</dbReference>
<dbReference type="neXtProt" id="NX_Q9P0U3"/>
<dbReference type="OpenTargets" id="ENSG00000079387"/>
<dbReference type="PharmGKB" id="PA134947038"/>
<dbReference type="VEuPathDB" id="HostDB:ENSG00000079387"/>
<dbReference type="eggNOG" id="KOG0778">
    <property type="taxonomic scope" value="Eukaryota"/>
</dbReference>
<dbReference type="GeneTree" id="ENSGT00940000155489"/>
<dbReference type="HOGENOM" id="CLU_022541_0_0_1"/>
<dbReference type="InParanoid" id="Q9P0U3"/>
<dbReference type="OMA" id="GCDSVIM"/>
<dbReference type="OrthoDB" id="1939479at2759"/>
<dbReference type="PAN-GO" id="Q9P0U3">
    <property type="GO annotations" value="3 GO annotations based on evolutionary models"/>
</dbReference>
<dbReference type="PhylomeDB" id="Q9P0U3"/>
<dbReference type="TreeFam" id="TF316289"/>
<dbReference type="BRENDA" id="3.4.22.B70">
    <property type="organism ID" value="2681"/>
</dbReference>
<dbReference type="PathwayCommons" id="Q9P0U3"/>
<dbReference type="Reactome" id="R-HSA-3065679">
    <property type="pathway name" value="SUMO is proteolytically processed"/>
</dbReference>
<dbReference type="Reactome" id="R-HSA-9035034">
    <property type="pathway name" value="RHOF GTPase cycle"/>
</dbReference>
<dbReference type="SignaLink" id="Q9P0U3"/>
<dbReference type="SIGNOR" id="Q9P0U3"/>
<dbReference type="BioGRID-ORCS" id="29843">
    <property type="hits" value="29 hits in 1170 CRISPR screens"/>
</dbReference>
<dbReference type="ChiTaRS" id="SENP1">
    <property type="organism name" value="human"/>
</dbReference>
<dbReference type="EvolutionaryTrace" id="Q9P0U3"/>
<dbReference type="GeneWiki" id="SENP1"/>
<dbReference type="GenomeRNAi" id="29843"/>
<dbReference type="Pharos" id="Q9P0U3">
    <property type="development level" value="Tchem"/>
</dbReference>
<dbReference type="PRO" id="PR:Q9P0U3"/>
<dbReference type="Proteomes" id="UP000005640">
    <property type="component" value="Chromosome 12"/>
</dbReference>
<dbReference type="RNAct" id="Q9P0U3">
    <property type="molecule type" value="protein"/>
</dbReference>
<dbReference type="Bgee" id="ENSG00000079387">
    <property type="expression patterns" value="Expressed in testis and 153 other cell types or tissues"/>
</dbReference>
<dbReference type="ExpressionAtlas" id="Q9P0U3">
    <property type="expression patterns" value="baseline and differential"/>
</dbReference>
<dbReference type="GO" id="GO:0005925">
    <property type="term" value="C:focal adhesion"/>
    <property type="evidence" value="ECO:0000314"/>
    <property type="project" value="HPA"/>
</dbReference>
<dbReference type="GO" id="GO:0098978">
    <property type="term" value="C:glutamatergic synapse"/>
    <property type="evidence" value="ECO:0007669"/>
    <property type="project" value="Ensembl"/>
</dbReference>
<dbReference type="GO" id="GO:0031965">
    <property type="term" value="C:nuclear membrane"/>
    <property type="evidence" value="ECO:0000314"/>
    <property type="project" value="HPA"/>
</dbReference>
<dbReference type="GO" id="GO:0005654">
    <property type="term" value="C:nucleoplasm"/>
    <property type="evidence" value="ECO:0000314"/>
    <property type="project" value="HPA"/>
</dbReference>
<dbReference type="GO" id="GO:0005634">
    <property type="term" value="C:nucleus"/>
    <property type="evidence" value="ECO:0000318"/>
    <property type="project" value="GO_Central"/>
</dbReference>
<dbReference type="GO" id="GO:0099524">
    <property type="term" value="C:postsynaptic cytosol"/>
    <property type="evidence" value="ECO:0007669"/>
    <property type="project" value="Ensembl"/>
</dbReference>
<dbReference type="GO" id="GO:0099523">
    <property type="term" value="C:presynaptic cytosol"/>
    <property type="evidence" value="ECO:0007669"/>
    <property type="project" value="Ensembl"/>
</dbReference>
<dbReference type="GO" id="GO:0016929">
    <property type="term" value="F:deSUMOylase activity"/>
    <property type="evidence" value="ECO:0000250"/>
    <property type="project" value="UniProtKB"/>
</dbReference>
<dbReference type="GO" id="GO:0004175">
    <property type="term" value="F:endopeptidase activity"/>
    <property type="evidence" value="ECO:0000304"/>
    <property type="project" value="ProtInc"/>
</dbReference>
<dbReference type="GO" id="GO:0070139">
    <property type="term" value="F:SUMO-specific endopeptidase activity"/>
    <property type="evidence" value="ECO:0000314"/>
    <property type="project" value="UniProtKB"/>
</dbReference>
<dbReference type="GO" id="GO:0032435">
    <property type="term" value="P:negative regulation of proteasomal ubiquitin-dependent protein catabolic process"/>
    <property type="evidence" value="ECO:0007669"/>
    <property type="project" value="Ensembl"/>
</dbReference>
<dbReference type="GO" id="GO:0045944">
    <property type="term" value="P:positive regulation of transcription by RNA polymerase II"/>
    <property type="evidence" value="ECO:0000316"/>
    <property type="project" value="MGI"/>
</dbReference>
<dbReference type="GO" id="GO:0043161">
    <property type="term" value="P:proteasome-mediated ubiquitin-dependent protein catabolic process"/>
    <property type="evidence" value="ECO:0007669"/>
    <property type="project" value="Ensembl"/>
</dbReference>
<dbReference type="GO" id="GO:0016926">
    <property type="term" value="P:protein desumoylation"/>
    <property type="evidence" value="ECO:0000315"/>
    <property type="project" value="UniProtKB"/>
</dbReference>
<dbReference type="GO" id="GO:0016925">
    <property type="term" value="P:protein sumoylation"/>
    <property type="evidence" value="ECO:0000304"/>
    <property type="project" value="Reactome"/>
</dbReference>
<dbReference type="GO" id="GO:0010724">
    <property type="term" value="P:regulation of definitive erythrocyte differentiation"/>
    <property type="evidence" value="ECO:0007669"/>
    <property type="project" value="Ensembl"/>
</dbReference>
<dbReference type="GO" id="GO:0043488">
    <property type="term" value="P:regulation of mRNA stability"/>
    <property type="evidence" value="ECO:0000314"/>
    <property type="project" value="UniProt"/>
</dbReference>
<dbReference type="GO" id="GO:0150052">
    <property type="term" value="P:regulation of postsynapse assembly"/>
    <property type="evidence" value="ECO:0007669"/>
    <property type="project" value="Ensembl"/>
</dbReference>
<dbReference type="FunFam" id="3.40.395.10:FF:000001">
    <property type="entry name" value="Sentrin-specific protease 1"/>
    <property type="match status" value="1"/>
</dbReference>
<dbReference type="Gene3D" id="3.40.395.10">
    <property type="entry name" value="Adenoviral Proteinase, Chain A"/>
    <property type="match status" value="1"/>
</dbReference>
<dbReference type="InterPro" id="IPR038765">
    <property type="entry name" value="Papain-like_cys_pep_sf"/>
</dbReference>
<dbReference type="InterPro" id="IPR003653">
    <property type="entry name" value="Peptidase_C48_C"/>
</dbReference>
<dbReference type="PANTHER" id="PTHR12606:SF30">
    <property type="entry name" value="SENTRIN-SPECIFIC PROTEASE 1"/>
    <property type="match status" value="1"/>
</dbReference>
<dbReference type="PANTHER" id="PTHR12606">
    <property type="entry name" value="SENTRIN/SUMO-SPECIFIC PROTEASE"/>
    <property type="match status" value="1"/>
</dbReference>
<dbReference type="Pfam" id="PF02902">
    <property type="entry name" value="Peptidase_C48"/>
    <property type="match status" value="1"/>
</dbReference>
<dbReference type="SUPFAM" id="SSF54001">
    <property type="entry name" value="Cysteine proteinases"/>
    <property type="match status" value="1"/>
</dbReference>
<dbReference type="PROSITE" id="PS50600">
    <property type="entry name" value="ULP_PROTEASE"/>
    <property type="match status" value="1"/>
</dbReference>
<accession>Q9P0U3</accession>
<accession>A8K7P5</accession>
<accession>Q86XC8</accession>
<proteinExistence type="evidence at protein level"/>
<feature type="chain" id="PRO_0000101716" description="Sentrin-specific protease 1">
    <location>
        <begin position="1"/>
        <end position="644"/>
    </location>
</feature>
<feature type="region of interest" description="Interaction with CCAR2" evidence="15">
    <location>
        <begin position="1"/>
        <end position="200"/>
    </location>
</feature>
<feature type="region of interest" description="Disordered" evidence="2">
    <location>
        <begin position="92"/>
        <end position="117"/>
    </location>
</feature>
<feature type="region of interest" description="Disordered" evidence="2">
    <location>
        <begin position="156"/>
        <end position="184"/>
    </location>
</feature>
<feature type="region of interest" description="Disordered" evidence="2">
    <location>
        <begin position="283"/>
        <end position="312"/>
    </location>
</feature>
<feature type="region of interest" description="Protease" evidence="9">
    <location>
        <begin position="450"/>
        <end position="613"/>
    </location>
</feature>
<feature type="short sequence motif" description="Nuclear localization signal" evidence="21">
    <location>
        <begin position="171"/>
        <end position="177"/>
    </location>
</feature>
<feature type="short sequence motif" description="Nuclear localization signal" evidence="1">
    <location>
        <begin position="574"/>
        <end position="577"/>
    </location>
</feature>
<feature type="short sequence motif" description="Nuclear localization signal" evidence="1">
    <location>
        <begin position="628"/>
        <end position="634"/>
    </location>
</feature>
<feature type="short sequence motif" description="Nuclear export signal" evidence="22">
    <location>
        <begin position="635"/>
        <end position="644"/>
    </location>
</feature>
<feature type="compositionally biased region" description="Low complexity" evidence="2">
    <location>
        <begin position="99"/>
        <end position="117"/>
    </location>
</feature>
<feature type="active site" evidence="9">
    <location>
        <position position="533"/>
    </location>
</feature>
<feature type="active site" evidence="9">
    <location>
        <position position="550"/>
    </location>
</feature>
<feature type="active site" description="Nucleophile" evidence="9">
    <location>
        <position position="603"/>
    </location>
</feature>
<feature type="modified residue" description="Phosphoserine" evidence="24">
    <location>
        <position position="57"/>
    </location>
</feature>
<feature type="modified residue" description="Phosphoserine" evidence="24">
    <location>
        <position position="117"/>
    </location>
</feature>
<feature type="modified residue" description="Phosphoserine" evidence="24 25">
    <location>
        <position position="132"/>
    </location>
</feature>
<feature type="modified residue" description="Phosphoserine" evidence="23 24">
    <location>
        <position position="157"/>
    </location>
</feature>
<feature type="splice variant" id="VSP_035777" description="In isoform 2." evidence="19">
    <location>
        <position position="593"/>
    </location>
</feature>
<feature type="sequence variant" id="VAR_029648" description="In dbSNP:rs17854369." evidence="7">
    <original>I</original>
    <variation>V</variation>
    <location>
        <position position="193"/>
    </location>
</feature>
<feature type="sequence variant" id="VAR_047547" description="In dbSNP:rs35130318.">
    <original>A</original>
    <variation>T</variation>
    <location>
        <position position="280"/>
    </location>
</feature>
<feature type="sequence variant" id="VAR_029649" description="In dbSNP:rs17854368." evidence="7">
    <original>D</original>
    <variation>G</variation>
    <location>
        <position position="350"/>
    </location>
</feature>
<feature type="mutagenesis site" description="No effect on SUMO2 processing and SUMO2 deconjugating activities." evidence="9">
    <original>D</original>
    <variation>A</variation>
    <location>
        <position position="441"/>
    </location>
</feature>
<feature type="mutagenesis site" description="Impairs SUMO2 processing and SUMO2 deconjugating activities." evidence="9">
    <original>W</original>
    <variation>A</variation>
    <location>
        <position position="465"/>
    </location>
</feature>
<feature type="mutagenesis site" description="Slightly impairs SUMO2 processing activity. No effect on SUMO2 deconjugating activity." evidence="9">
    <original>D</original>
    <variation>A</variation>
    <location>
        <position position="468"/>
    </location>
</feature>
<feature type="mutagenesis site" description="Impairs SUMO2 processing activity. No effect on SUMO2 deconjugating activity." evidence="9">
    <original>F</original>
    <variation>A</variation>
    <location>
        <position position="496"/>
    </location>
</feature>
<feature type="mutagenesis site" description="Impairs SUMO2 processing activity. No effect on SUMO2 deconjugating activity." evidence="9">
    <original>R</original>
    <variation>A</variation>
    <location>
        <position position="511"/>
    </location>
</feature>
<feature type="mutagenesis site" description="Impairs SUMO2 processing and SUMO2 deconjugating activities." evidence="9">
    <original>W</original>
    <variation>A</variation>
    <location>
        <position position="512"/>
    </location>
</feature>
<feature type="mutagenesis site" description="Impairs SUMO2 processing activity. No effect on SUMO2 deconjugating activity." evidence="9">
    <original>H</original>
    <variation>A</variation>
    <location>
        <position position="529"/>
    </location>
</feature>
<feature type="mutagenesis site" description="No effect on SUMO2 processing and SUMO2 deconjugating activities." evidence="9">
    <original>V</original>
    <variation>A</variation>
    <location>
        <position position="532"/>
    </location>
</feature>
<feature type="mutagenesis site" description="Abolishes SUMO2 processing and SUMO2 deconjugating activities." evidence="9">
    <original>H</original>
    <variation>A</variation>
    <location>
        <position position="533"/>
    </location>
</feature>
<feature type="mutagenesis site" description="Abolishes SUMO2 processing and SUMO2 deconjugating activities." evidence="9">
    <original>W</original>
    <variation>A</variation>
    <location>
        <position position="534"/>
    </location>
</feature>
<feature type="mutagenesis site" description="Abolishes SUMO2 processing and SUMO2 deconjugating activities." evidence="9">
    <original>D</original>
    <variation>A</variation>
    <location>
        <position position="550"/>
    </location>
</feature>
<feature type="mutagenesis site" description="Abolishes SUMO2 processing and SUMO2 deconjugating activities." evidence="9">
    <original>Q</original>
    <variation>A</variation>
    <location>
        <position position="597"/>
    </location>
</feature>
<feature type="mutagenesis site" description="Abolishes SUMO2 processing and SUMO2 deconjugating activities." evidence="4 9 10">
    <original>C</original>
    <variation>A</variation>
    <variation>S</variation>
    <location>
        <position position="603"/>
    </location>
</feature>
<feature type="mutagenesis site" description="Exclusively nuclear. Loss of CCAR2 desumoylation." evidence="4 9 10 15">
    <original>C</original>
    <variation>S</variation>
    <location>
        <position position="603"/>
    </location>
</feature>
<feature type="helix" evidence="27">
    <location>
        <begin position="425"/>
        <end position="434"/>
    </location>
</feature>
<feature type="strand" evidence="27">
    <location>
        <begin position="435"/>
        <end position="438"/>
    </location>
</feature>
<feature type="strand" evidence="27">
    <location>
        <begin position="445"/>
        <end position="447"/>
    </location>
</feature>
<feature type="strand" evidence="27">
    <location>
        <begin position="450"/>
        <end position="452"/>
    </location>
</feature>
<feature type="helix" evidence="27">
    <location>
        <begin position="454"/>
        <end position="458"/>
    </location>
</feature>
<feature type="helix" evidence="27">
    <location>
        <begin position="468"/>
        <end position="481"/>
    </location>
</feature>
<feature type="strand" evidence="26">
    <location>
        <begin position="482"/>
        <end position="484"/>
    </location>
</feature>
<feature type="strand" evidence="27">
    <location>
        <begin position="490"/>
        <end position="492"/>
    </location>
</feature>
<feature type="turn" evidence="27">
    <location>
        <begin position="495"/>
        <end position="498"/>
    </location>
</feature>
<feature type="helix" evidence="27">
    <location>
        <begin position="499"/>
        <end position="502"/>
    </location>
</feature>
<feature type="helix" evidence="27">
    <location>
        <begin position="506"/>
        <end position="509"/>
    </location>
</feature>
<feature type="turn" evidence="27">
    <location>
        <begin position="510"/>
        <end position="515"/>
    </location>
</feature>
<feature type="helix" evidence="27">
    <location>
        <begin position="518"/>
        <end position="520"/>
    </location>
</feature>
<feature type="strand" evidence="27">
    <location>
        <begin position="521"/>
        <end position="530"/>
    </location>
</feature>
<feature type="strand" evidence="27">
    <location>
        <begin position="533"/>
        <end position="540"/>
    </location>
</feature>
<feature type="turn" evidence="27">
    <location>
        <begin position="541"/>
        <end position="544"/>
    </location>
</feature>
<feature type="strand" evidence="27">
    <location>
        <begin position="545"/>
        <end position="549"/>
    </location>
</feature>
<feature type="helix" evidence="27">
    <location>
        <begin position="557"/>
        <end position="575"/>
    </location>
</feature>
<feature type="strand" evidence="27">
    <location>
        <begin position="585"/>
        <end position="588"/>
    </location>
</feature>
<feature type="strand" evidence="27">
    <location>
        <begin position="591"/>
        <end position="594"/>
    </location>
</feature>
<feature type="helix" evidence="27">
    <location>
        <begin position="600"/>
        <end position="602"/>
    </location>
</feature>
<feature type="helix" evidence="27">
    <location>
        <begin position="603"/>
        <end position="615"/>
    </location>
</feature>
<feature type="helix" evidence="27">
    <location>
        <begin position="624"/>
        <end position="626"/>
    </location>
</feature>
<feature type="helix" evidence="27">
    <location>
        <begin position="627"/>
        <end position="640"/>
    </location>
</feature>
<keyword id="KW-0002">3D-structure</keyword>
<keyword id="KW-0025">Alternative splicing</keyword>
<keyword id="KW-0963">Cytoplasm</keyword>
<keyword id="KW-0378">Hydrolase</keyword>
<keyword id="KW-0539">Nucleus</keyword>
<keyword id="KW-0597">Phosphoprotein</keyword>
<keyword id="KW-0645">Protease</keyword>
<keyword id="KW-1267">Proteomics identification</keyword>
<keyword id="KW-1185">Reference proteome</keyword>
<keyword id="KW-0788">Thiol protease</keyword>
<keyword id="KW-0833">Ubl conjugation pathway</keyword>
<sequence length="644" mass="73481">MDDIADRMRMDAGEVTLVNHNSVFKTHLLPQTGFPEDQLSLSDQQILSSRQGHLDRSFTCSTRSAAYNPSYYSDNPSSDSFLGSGDLRTFGQSANGQWRNSTPSSSSSLQKSRNSRSLYLETRKTSSGLSNSFAGKSNHHCHVSAYEKSFPIKPVPSPSWSGSCRRSLLSPKKTQRRHVSTAEETVQEEEREIYRQLLQMVTGKQFTIAKPTTHFPLHLSRCLSSSKNTLKDSLFKNGNSCASQIIGSDTSSSGSASILTNQEQLSHSVYSLSSYTPDVAFGSKDSGTLHHPHHHHSVPHQPDNLAASNTQSEGSDSVILLKVKDSQTPTPSSTFFQAELWIKELTSVYDSRARERLRQIEEQKALALQLQNQRLQEREHSVHDSVELHLRVPLEKEIPVTVVQETQKKGHKLTDSEDEFPEITEEMEKEIKNVFRNGNQDEVLSEAFRLTITRKDIQTLNHLNWLNDEIINFYMNMLMERSKEKGLPSVHAFNTFFFTKLKTAGYQAVKRWTKKVDVFSVDILLVPIHLGVHWCLAVVDFRKKNITYYDSMGGINNEACRILLQYLKQESIDKKRKEFDTNGWQLFSKKSQEIPQQMNGSDCGMFACKYADCITKDRPINFTQQHMPYFRKRMVWEILHRKLL</sequence>
<gene>
    <name type="primary">SENP1</name>
</gene>